<protein>
    <recommendedName>
        <fullName evidence="1">Recombination protein RecR</fullName>
    </recommendedName>
</protein>
<sequence length="200" mass="20714">MAASAGPEIERLIGLLAKLPGLGPRSARRAALALLKRRDQLLAPLSDALAEAAARVKTCSTCGSLDTQDPCAICSDGTRDASLICVVEEVGALWAMERAGAFRGRYHVLGGLLSALDGVGPDALRVGPLVARASEPGVREVILALPATVDGQTTAHYLAERLAGAEVTVSMLARGVPVGGELDWLDDGTIAQAMRARRPA</sequence>
<accession>B4RDT6</accession>
<organism>
    <name type="scientific">Phenylobacterium zucineum (strain HLK1)</name>
    <dbReference type="NCBI Taxonomy" id="450851"/>
    <lineage>
        <taxon>Bacteria</taxon>
        <taxon>Pseudomonadati</taxon>
        <taxon>Pseudomonadota</taxon>
        <taxon>Alphaproteobacteria</taxon>
        <taxon>Caulobacterales</taxon>
        <taxon>Caulobacteraceae</taxon>
        <taxon>Phenylobacterium</taxon>
    </lineage>
</organism>
<proteinExistence type="inferred from homology"/>
<feature type="chain" id="PRO_1000089753" description="Recombination protein RecR">
    <location>
        <begin position="1"/>
        <end position="200"/>
    </location>
</feature>
<feature type="domain" description="Toprim" evidence="1">
    <location>
        <begin position="82"/>
        <end position="177"/>
    </location>
</feature>
<feature type="zinc finger region" description="C4-type" evidence="1">
    <location>
        <begin position="59"/>
        <end position="74"/>
    </location>
</feature>
<gene>
    <name evidence="1" type="primary">recR</name>
    <name type="ordered locus">PHZ_c0371</name>
</gene>
<dbReference type="EMBL" id="CP000747">
    <property type="protein sequence ID" value="ACG76785.1"/>
    <property type="molecule type" value="Genomic_DNA"/>
</dbReference>
<dbReference type="RefSeq" id="WP_012520933.1">
    <property type="nucleotide sequence ID" value="NC_011144.1"/>
</dbReference>
<dbReference type="SMR" id="B4RDT6"/>
<dbReference type="STRING" id="450851.PHZ_c0371"/>
<dbReference type="KEGG" id="pzu:PHZ_c0371"/>
<dbReference type="eggNOG" id="COG0353">
    <property type="taxonomic scope" value="Bacteria"/>
</dbReference>
<dbReference type="HOGENOM" id="CLU_060739_1_1_5"/>
<dbReference type="OrthoDB" id="9802672at2"/>
<dbReference type="Proteomes" id="UP000001868">
    <property type="component" value="Chromosome"/>
</dbReference>
<dbReference type="GO" id="GO:0003677">
    <property type="term" value="F:DNA binding"/>
    <property type="evidence" value="ECO:0007669"/>
    <property type="project" value="UniProtKB-UniRule"/>
</dbReference>
<dbReference type="GO" id="GO:0008270">
    <property type="term" value="F:zinc ion binding"/>
    <property type="evidence" value="ECO:0007669"/>
    <property type="project" value="UniProtKB-KW"/>
</dbReference>
<dbReference type="GO" id="GO:0006310">
    <property type="term" value="P:DNA recombination"/>
    <property type="evidence" value="ECO:0007669"/>
    <property type="project" value="UniProtKB-UniRule"/>
</dbReference>
<dbReference type="GO" id="GO:0006281">
    <property type="term" value="P:DNA repair"/>
    <property type="evidence" value="ECO:0007669"/>
    <property type="project" value="UniProtKB-UniRule"/>
</dbReference>
<dbReference type="CDD" id="cd01025">
    <property type="entry name" value="TOPRIM_recR"/>
    <property type="match status" value="1"/>
</dbReference>
<dbReference type="Gene3D" id="3.40.1360.10">
    <property type="match status" value="1"/>
</dbReference>
<dbReference type="Gene3D" id="6.10.250.240">
    <property type="match status" value="1"/>
</dbReference>
<dbReference type="Gene3D" id="1.10.8.420">
    <property type="entry name" value="RecR Domain 1"/>
    <property type="match status" value="1"/>
</dbReference>
<dbReference type="HAMAP" id="MF_00017">
    <property type="entry name" value="RecR"/>
    <property type="match status" value="1"/>
</dbReference>
<dbReference type="InterPro" id="IPR000093">
    <property type="entry name" value="DNA_Rcmb_RecR"/>
</dbReference>
<dbReference type="InterPro" id="IPR023627">
    <property type="entry name" value="Rcmb_RecR"/>
</dbReference>
<dbReference type="InterPro" id="IPR015967">
    <property type="entry name" value="Rcmb_RecR_Znf"/>
</dbReference>
<dbReference type="InterPro" id="IPR006171">
    <property type="entry name" value="TOPRIM_dom"/>
</dbReference>
<dbReference type="InterPro" id="IPR034137">
    <property type="entry name" value="TOPRIM_RecR"/>
</dbReference>
<dbReference type="NCBIfam" id="TIGR00615">
    <property type="entry name" value="recR"/>
    <property type="match status" value="1"/>
</dbReference>
<dbReference type="PANTHER" id="PTHR30446">
    <property type="entry name" value="RECOMBINATION PROTEIN RECR"/>
    <property type="match status" value="1"/>
</dbReference>
<dbReference type="PANTHER" id="PTHR30446:SF0">
    <property type="entry name" value="RECOMBINATION PROTEIN RECR"/>
    <property type="match status" value="1"/>
</dbReference>
<dbReference type="Pfam" id="PF21175">
    <property type="entry name" value="RecR_C"/>
    <property type="match status" value="1"/>
</dbReference>
<dbReference type="Pfam" id="PF21176">
    <property type="entry name" value="RecR_HhH"/>
    <property type="match status" value="1"/>
</dbReference>
<dbReference type="Pfam" id="PF02132">
    <property type="entry name" value="RecR_ZnF"/>
    <property type="match status" value="1"/>
</dbReference>
<dbReference type="Pfam" id="PF13662">
    <property type="entry name" value="Toprim_4"/>
    <property type="match status" value="1"/>
</dbReference>
<dbReference type="SUPFAM" id="SSF111304">
    <property type="entry name" value="Recombination protein RecR"/>
    <property type="match status" value="1"/>
</dbReference>
<dbReference type="PROSITE" id="PS01300">
    <property type="entry name" value="RECR"/>
    <property type="match status" value="1"/>
</dbReference>
<dbReference type="PROSITE" id="PS50880">
    <property type="entry name" value="TOPRIM"/>
    <property type="match status" value="1"/>
</dbReference>
<keyword id="KW-0227">DNA damage</keyword>
<keyword id="KW-0233">DNA recombination</keyword>
<keyword id="KW-0234">DNA repair</keyword>
<keyword id="KW-0479">Metal-binding</keyword>
<keyword id="KW-1185">Reference proteome</keyword>
<keyword id="KW-0862">Zinc</keyword>
<keyword id="KW-0863">Zinc-finger</keyword>
<reference key="1">
    <citation type="journal article" date="2008" name="BMC Genomics">
        <title>Complete genome of Phenylobacterium zucineum - a novel facultative intracellular bacterium isolated from human erythroleukemia cell line K562.</title>
        <authorList>
            <person name="Luo Y."/>
            <person name="Xu X."/>
            <person name="Ding Z."/>
            <person name="Liu Z."/>
            <person name="Zhang B."/>
            <person name="Yan Z."/>
            <person name="Sun J."/>
            <person name="Hu S."/>
            <person name="Hu X."/>
        </authorList>
    </citation>
    <scope>NUCLEOTIDE SEQUENCE [LARGE SCALE GENOMIC DNA]</scope>
    <source>
        <strain>HLK1</strain>
    </source>
</reference>
<evidence type="ECO:0000255" key="1">
    <source>
        <dbReference type="HAMAP-Rule" id="MF_00017"/>
    </source>
</evidence>
<comment type="function">
    <text evidence="1">May play a role in DNA repair. It seems to be involved in an RecBC-independent recombinational process of DNA repair. It may act with RecF and RecO.</text>
</comment>
<comment type="similarity">
    <text evidence="1">Belongs to the RecR family.</text>
</comment>
<name>RECR_PHEZH</name>